<reference key="1">
    <citation type="journal article" date="2004" name="Genome Res.">
        <title>The status, quality, and expansion of the NIH full-length cDNA project: the Mammalian Gene Collection (MGC).</title>
        <authorList>
            <consortium name="The MGC Project Team"/>
        </authorList>
    </citation>
    <scope>NUCLEOTIDE SEQUENCE [LARGE SCALE MRNA]</scope>
</reference>
<dbReference type="EMBL" id="BC093909">
    <property type="protein sequence ID" value="AAH93909.1"/>
    <property type="molecule type" value="mRNA"/>
</dbReference>
<dbReference type="EMBL" id="BC093935">
    <property type="protein sequence ID" value="AAH93935.1"/>
    <property type="molecule type" value="mRNA"/>
</dbReference>
<dbReference type="CCDS" id="CCDS32989.1"/>
<dbReference type="RefSeq" id="NP_001020762.1">
    <property type="nucleotide sequence ID" value="NM_001025591.4"/>
</dbReference>
<dbReference type="SMR" id="Q4G0G5"/>
<dbReference type="BioGRID" id="129862">
    <property type="interactions" value="3"/>
</dbReference>
<dbReference type="IntAct" id="Q4G0G5">
    <property type="interactions" value="1"/>
</dbReference>
<dbReference type="STRING" id="9606.ENSP00000469876"/>
<dbReference type="BioMuta" id="SCGB2B2"/>
<dbReference type="DMDM" id="121943820"/>
<dbReference type="PaxDb" id="9606-ENSP00000469876"/>
<dbReference type="Antibodypedia" id="44378">
    <property type="antibodies" value="10 antibodies from 9 providers"/>
</dbReference>
<dbReference type="DNASU" id="284402"/>
<dbReference type="Ensembl" id="ENST00000379204.2">
    <property type="protein sequence ID" value="ENSP00000368502.2"/>
    <property type="gene ID" value="ENSG00000205209.8"/>
</dbReference>
<dbReference type="Ensembl" id="ENST00000601241.6">
    <property type="protein sequence ID" value="ENSP00000469876.1"/>
    <property type="gene ID" value="ENSG00000205209.8"/>
</dbReference>
<dbReference type="GeneID" id="284402"/>
<dbReference type="KEGG" id="hsa:284402"/>
<dbReference type="MANE-Select" id="ENST00000601241.6">
    <property type="protein sequence ID" value="ENSP00000469876.1"/>
    <property type="RefSeq nucleotide sequence ID" value="NM_001025591.4"/>
    <property type="RefSeq protein sequence ID" value="NP_001020762.1"/>
</dbReference>
<dbReference type="UCSC" id="uc002nvn.4">
    <property type="organism name" value="human"/>
</dbReference>
<dbReference type="AGR" id="HGNC:27616"/>
<dbReference type="CTD" id="284402"/>
<dbReference type="DisGeNET" id="284402"/>
<dbReference type="GeneCards" id="SCGB2B2"/>
<dbReference type="HGNC" id="HGNC:27616">
    <property type="gene designation" value="SCGB2B2"/>
</dbReference>
<dbReference type="HPA" id="ENSG00000205209">
    <property type="expression patterns" value="Tissue enhanced (pancreas)"/>
</dbReference>
<dbReference type="MIM" id="615063">
    <property type="type" value="gene"/>
</dbReference>
<dbReference type="neXtProt" id="NX_Q4G0G5"/>
<dbReference type="OpenTargets" id="ENSG00000205209"/>
<dbReference type="PharmGKB" id="PA164725574"/>
<dbReference type="VEuPathDB" id="HostDB:ENSG00000205209"/>
<dbReference type="eggNOG" id="KOG1721">
    <property type="taxonomic scope" value="Eukaryota"/>
</dbReference>
<dbReference type="GeneTree" id="ENSGT00410000028752"/>
<dbReference type="HOGENOM" id="CLU_2412691_0_0_1"/>
<dbReference type="InParanoid" id="Q4G0G5"/>
<dbReference type="OMA" id="QCYRNIS"/>
<dbReference type="OrthoDB" id="9532725at2759"/>
<dbReference type="PAN-GO" id="Q4G0G5">
    <property type="GO annotations" value="0 GO annotations based on evolutionary models"/>
</dbReference>
<dbReference type="PhylomeDB" id="Q4G0G5"/>
<dbReference type="TreeFam" id="TF338526"/>
<dbReference type="PathwayCommons" id="Q4G0G5"/>
<dbReference type="SignaLink" id="Q4G0G5"/>
<dbReference type="BioGRID-ORCS" id="284402">
    <property type="hits" value="12 hits in 1125 CRISPR screens"/>
</dbReference>
<dbReference type="ChiTaRS" id="SCGB2B2">
    <property type="organism name" value="human"/>
</dbReference>
<dbReference type="GenomeRNAi" id="284402"/>
<dbReference type="Pharos" id="Q4G0G5">
    <property type="development level" value="Tdark"/>
</dbReference>
<dbReference type="PRO" id="PR:Q4G0G5"/>
<dbReference type="Proteomes" id="UP000005640">
    <property type="component" value="Chromosome 19"/>
</dbReference>
<dbReference type="RNAct" id="Q4G0G5">
    <property type="molecule type" value="protein"/>
</dbReference>
<dbReference type="Bgee" id="ENSG00000205209">
    <property type="expression patterns" value="Expressed in male germ line stem cell (sensu Vertebrata) in testis and 96 other cell types or tissues"/>
</dbReference>
<dbReference type="GO" id="GO:0005576">
    <property type="term" value="C:extracellular region"/>
    <property type="evidence" value="ECO:0007669"/>
    <property type="project" value="UniProtKB-SubCell"/>
</dbReference>
<dbReference type="Gene3D" id="1.20.920.50">
    <property type="match status" value="1"/>
</dbReference>
<dbReference type="InterPro" id="IPR016126">
    <property type="entry name" value="Secretoglobin"/>
</dbReference>
<dbReference type="InterPro" id="IPR053723">
    <property type="entry name" value="Secretoglobin_Domain_sf"/>
</dbReference>
<dbReference type="InterPro" id="IPR035960">
    <property type="entry name" value="Secretoglobin_sf"/>
</dbReference>
<dbReference type="Pfam" id="PF01099">
    <property type="entry name" value="Uteroglobin"/>
    <property type="match status" value="1"/>
</dbReference>
<dbReference type="SUPFAM" id="SSF48201">
    <property type="entry name" value="Uteroglobin-like"/>
    <property type="match status" value="1"/>
</dbReference>
<dbReference type="PROSITE" id="PS51311">
    <property type="entry name" value="SCGB"/>
    <property type="match status" value="1"/>
</dbReference>
<proteinExistence type="evidence at protein level"/>
<accession>Q4G0G5</accession>
<keyword id="KW-1185">Reference proteome</keyword>
<keyword id="KW-0964">Secreted</keyword>
<keyword id="KW-0732">Signal</keyword>
<comment type="interaction">
    <interactant intactId="EBI-12019232">
        <id>Q4G0G5</id>
    </interactant>
    <interactant intactId="EBI-947187">
        <id>Q9UHD9</id>
        <label>UBQLN2</label>
    </interactant>
    <organismsDiffer>false</organismsDiffer>
    <experiments>3</experiments>
</comment>
<comment type="subcellular location">
    <subcellularLocation>
        <location evidence="2">Secreted</location>
    </subcellularLocation>
</comment>
<comment type="similarity">
    <text evidence="2">Belongs to the secretoglobin family.</text>
</comment>
<protein>
    <recommendedName>
        <fullName>Secretoglobin family 2B member 2</fullName>
    </recommendedName>
    <alternativeName>
        <fullName>Secretoglobin-like protein</fullName>
    </alternativeName>
</protein>
<gene>
    <name type="primary">SCGB2B2</name>
    <name type="synonym">SCGB4A2</name>
    <name type="synonym">SCGBL</name>
</gene>
<organism>
    <name type="scientific">Homo sapiens</name>
    <name type="common">Human</name>
    <dbReference type="NCBI Taxonomy" id="9606"/>
    <lineage>
        <taxon>Eukaryota</taxon>
        <taxon>Metazoa</taxon>
        <taxon>Chordata</taxon>
        <taxon>Craniata</taxon>
        <taxon>Vertebrata</taxon>
        <taxon>Euteleostomi</taxon>
        <taxon>Mammalia</taxon>
        <taxon>Eutheria</taxon>
        <taxon>Euarchontoglires</taxon>
        <taxon>Primates</taxon>
        <taxon>Haplorrhini</taxon>
        <taxon>Catarrhini</taxon>
        <taxon>Hominidae</taxon>
        <taxon>Homo</taxon>
    </lineage>
</organism>
<evidence type="ECO:0000255" key="1"/>
<evidence type="ECO:0000305" key="2"/>
<name>SC2B2_HUMAN</name>
<sequence>MRVTSATCALLLALICSVQLGDACLDIDKLLANVVFDVSQDLLKEELARYNPSPLTEESFLNVQQCFANVSVTERFAHSVVIKKILQSNDCIEAAF</sequence>
<feature type="signal peptide" evidence="1">
    <location>
        <begin position="1"/>
        <end position="23"/>
    </location>
</feature>
<feature type="chain" id="PRO_0000342373" description="Secretoglobin family 2B member 2">
    <location>
        <begin position="24"/>
        <end position="96"/>
    </location>
</feature>